<evidence type="ECO:0000255" key="1">
    <source>
        <dbReference type="HAMAP-Rule" id="MF_01061"/>
    </source>
</evidence>
<evidence type="ECO:0000256" key="2">
    <source>
        <dbReference type="SAM" id="MobiDB-lite"/>
    </source>
</evidence>
<feature type="chain" id="PRO_0000228963" description="Replication restart protein DnaT">
    <location>
        <begin position="1"/>
        <end position="179"/>
    </location>
</feature>
<feature type="region of interest" description="Disordered" evidence="2">
    <location>
        <begin position="156"/>
        <end position="179"/>
    </location>
</feature>
<comment type="function">
    <text evidence="1">Involved in the restart of stalled replication forks, which reloads the replicative helicase on sites other than the origin of replication. Can function in multiple replication restart pathways. Displaces ssDNA from a PriB-ssDNA complex. Probably forms a spiral filament on ssDNA.</text>
</comment>
<comment type="subunit">
    <text evidence="1">Homooligomerizes. Interacts with PriB. Component of the replication restart primosome. Primosome assembly occurs via a 'hand-off' mechanism. PriA binds to replication forks, subsequently PriB then DnaT bind; DnaT then displaces ssDNA to generate the helicase loading substrate.</text>
</comment>
<comment type="similarity">
    <text evidence="1">Belongs to the DnaT family.</text>
</comment>
<organism>
    <name type="scientific">Shigella sonnei (strain Ss046)</name>
    <dbReference type="NCBI Taxonomy" id="300269"/>
    <lineage>
        <taxon>Bacteria</taxon>
        <taxon>Pseudomonadati</taxon>
        <taxon>Pseudomonadota</taxon>
        <taxon>Gammaproteobacteria</taxon>
        <taxon>Enterobacterales</taxon>
        <taxon>Enterobacteriaceae</taxon>
        <taxon>Shigella</taxon>
    </lineage>
</organism>
<gene>
    <name evidence="1" type="primary">dnaT</name>
    <name type="ordered locus">SSON_4508</name>
</gene>
<accession>Q3YU31</accession>
<name>DNAT_SHISS</name>
<protein>
    <recommendedName>
        <fullName evidence="1">Replication restart protein DnaT</fullName>
    </recommendedName>
</protein>
<dbReference type="EMBL" id="CP000038">
    <property type="protein sequence ID" value="AAZ90981.1"/>
    <property type="molecule type" value="Genomic_DNA"/>
</dbReference>
<dbReference type="RefSeq" id="WP_000098818.1">
    <property type="nucleotide sequence ID" value="NC_007384.1"/>
</dbReference>
<dbReference type="SMR" id="Q3YU31"/>
<dbReference type="GeneID" id="93777486"/>
<dbReference type="KEGG" id="ssn:SSON_4508"/>
<dbReference type="HOGENOM" id="CLU_1501592_0_0_6"/>
<dbReference type="Proteomes" id="UP000002529">
    <property type="component" value="Chromosome"/>
</dbReference>
<dbReference type="GO" id="GO:1990077">
    <property type="term" value="C:primosome complex"/>
    <property type="evidence" value="ECO:0007669"/>
    <property type="project" value="UniProtKB-KW"/>
</dbReference>
<dbReference type="GO" id="GO:0006269">
    <property type="term" value="P:DNA replication, synthesis of primer"/>
    <property type="evidence" value="ECO:0007669"/>
    <property type="project" value="UniProtKB-UniRule"/>
</dbReference>
<dbReference type="FunFam" id="1.10.8.1180:FF:000001">
    <property type="entry name" value="Primosomal protein 1"/>
    <property type="match status" value="1"/>
</dbReference>
<dbReference type="Gene3D" id="1.10.8.1180">
    <property type="match status" value="1"/>
</dbReference>
<dbReference type="HAMAP" id="MF_01061">
    <property type="entry name" value="DnaT"/>
    <property type="match status" value="1"/>
</dbReference>
<dbReference type="InterPro" id="IPR020917">
    <property type="entry name" value="DnaT"/>
</dbReference>
<dbReference type="InterPro" id="IPR040480">
    <property type="entry name" value="DnaT_DNA_bind"/>
</dbReference>
<dbReference type="NCBIfam" id="NF002770">
    <property type="entry name" value="PRK02854.1"/>
    <property type="match status" value="1"/>
</dbReference>
<dbReference type="Pfam" id="PF17948">
    <property type="entry name" value="DnaT"/>
    <property type="match status" value="1"/>
</dbReference>
<proteinExistence type="inferred from homology"/>
<keyword id="KW-0235">DNA replication</keyword>
<keyword id="KW-0238">DNA-binding</keyword>
<keyword id="KW-0639">Primosome</keyword>
<keyword id="KW-1185">Reference proteome</keyword>
<reference key="1">
    <citation type="journal article" date="2005" name="Nucleic Acids Res.">
        <title>Genome dynamics and diversity of Shigella species, the etiologic agents of bacillary dysentery.</title>
        <authorList>
            <person name="Yang F."/>
            <person name="Yang J."/>
            <person name="Zhang X."/>
            <person name="Chen L."/>
            <person name="Jiang Y."/>
            <person name="Yan Y."/>
            <person name="Tang X."/>
            <person name="Wang J."/>
            <person name="Xiong Z."/>
            <person name="Dong J."/>
            <person name="Xue Y."/>
            <person name="Zhu Y."/>
            <person name="Xu X."/>
            <person name="Sun L."/>
            <person name="Chen S."/>
            <person name="Nie H."/>
            <person name="Peng J."/>
            <person name="Xu J."/>
            <person name="Wang Y."/>
            <person name="Yuan Z."/>
            <person name="Wen Y."/>
            <person name="Yao Z."/>
            <person name="Shen Y."/>
            <person name="Qiang B."/>
            <person name="Hou Y."/>
            <person name="Yu J."/>
            <person name="Jin Q."/>
        </authorList>
    </citation>
    <scope>NUCLEOTIDE SEQUENCE [LARGE SCALE GENOMIC DNA]</scope>
    <source>
        <strain>Ss046</strain>
    </source>
</reference>
<sequence length="179" mass="19455">MSSRVLTPDVVGIDALVHDHQTVLAKAEGGVVAVFANNAPAFYAVTPARLAELLALEEKLARPGSDVALDDQLYQEPQAAPVAVPMGKFAMYPDWQPDADFIRLAALWGVALREPVTTEELASFIAYWQAEGKVFHHVQWQQKLARSLQIGRASNGGLPKRDVNTVSEPDSQIPPGFRG</sequence>